<proteinExistence type="inferred from homology"/>
<evidence type="ECO:0000305" key="1"/>
<reference key="1">
    <citation type="journal article" date="1994" name="Mol. Biochem. Parasitol.">
        <title>Isolation and characterization of the gene encoding histone H2A from Trypanosoma cruzi.</title>
        <authorList>
            <person name="Puerta C."/>
            <person name="Martin J."/>
            <person name="Alonso C."/>
            <person name="Lopez M.C."/>
        </authorList>
    </citation>
    <scope>NUCLEOTIDE SEQUENCE [GENOMIC DNA]</scope>
</reference>
<reference key="2">
    <citation type="submission" date="2000-03" db="EMBL/GenBank/DDBJ databases">
        <authorList>
            <person name="Lopez Lopez M.C."/>
        </authorList>
    </citation>
    <scope>SEQUENCE REVISION TO 5; 92 AND 106</scope>
</reference>
<comment type="function">
    <text>Core component of nucleosome. Nucleosomes wrap and compact DNA into chromatin, limiting DNA accessibility to the cellular machineries which require DNA as a template. Histones thereby play a central role in transcription regulation, DNA repair, DNA replication and chromosomal stability. DNA accessibility is regulated via a complex set of post-translational modifications of histones, also called histone code, and nucleosome remodeling.</text>
</comment>
<comment type="subunit">
    <text>The nucleosome is a histone octamer containing two molecules each of H2A, H2B, H3 and H4 assembled in one H3-H4 heterotetramer and two H2A-H2B heterodimers. The octamer wraps approximately 147 bp of DNA.</text>
</comment>
<comment type="subcellular location">
    <subcellularLocation>
        <location>Nucleus</location>
    </subcellularLocation>
    <subcellularLocation>
        <location>Chromosome</location>
    </subcellularLocation>
</comment>
<comment type="similarity">
    <text evidence="1">Belongs to the histone H2A family.</text>
</comment>
<dbReference type="EMBL" id="X67287">
    <property type="protein sequence ID" value="CAA47703.2"/>
    <property type="molecule type" value="Genomic_DNA"/>
</dbReference>
<dbReference type="PIR" id="S25119">
    <property type="entry name" value="S25119"/>
</dbReference>
<dbReference type="SMR" id="P35066"/>
<dbReference type="VEuPathDB" id="TriTrypDB:BCY84_17361"/>
<dbReference type="VEuPathDB" id="TriTrypDB:C3747_22g1865c"/>
<dbReference type="VEuPathDB" id="TriTrypDB:C3747_22g1866c"/>
<dbReference type="VEuPathDB" id="TriTrypDB:C3747_22g1867c"/>
<dbReference type="VEuPathDB" id="TriTrypDB:C3747_22g1868c"/>
<dbReference type="VEuPathDB" id="TriTrypDB:C3747_22g1869c"/>
<dbReference type="VEuPathDB" id="TriTrypDB:C3747_22g1870c"/>
<dbReference type="VEuPathDB" id="TriTrypDB:C3747_22g1871c"/>
<dbReference type="VEuPathDB" id="TriTrypDB:C3747_22g1872c"/>
<dbReference type="VEuPathDB" id="TriTrypDB:C3747_22g1873c"/>
<dbReference type="VEuPathDB" id="TriTrypDB:C3747_22g1874c"/>
<dbReference type="VEuPathDB" id="TriTrypDB:C3747_22g1875c"/>
<dbReference type="VEuPathDB" id="TriTrypDB:C3747_22g1876c"/>
<dbReference type="VEuPathDB" id="TriTrypDB:C3747_22g1878c"/>
<dbReference type="VEuPathDB" id="TriTrypDB:C3747_259g205c"/>
<dbReference type="VEuPathDB" id="TriTrypDB:C4B63_242g10"/>
<dbReference type="VEuPathDB" id="TriTrypDB:Tc_MARK_125"/>
<dbReference type="VEuPathDB" id="TriTrypDB:TcBrA4_0093800"/>
<dbReference type="VEuPathDB" id="TriTrypDB:TcCL_NonESM00496"/>
<dbReference type="VEuPathDB" id="TriTrypDB:TcCLB.508321.21"/>
<dbReference type="VEuPathDB" id="TriTrypDB:TcCLB.511817.151"/>
<dbReference type="VEuPathDB" id="TriTrypDB:TcG_03831"/>
<dbReference type="VEuPathDB" id="TriTrypDB:TcYC6_0092810"/>
<dbReference type="VEuPathDB" id="TriTrypDB:TcYC6_0092820"/>
<dbReference type="VEuPathDB" id="TriTrypDB:TcYC6_0092830"/>
<dbReference type="VEuPathDB" id="TriTrypDB:TcYC6_0092840"/>
<dbReference type="VEuPathDB" id="TriTrypDB:TcYC6_0092850"/>
<dbReference type="VEuPathDB" id="TriTrypDB:TcYC6_0092860"/>
<dbReference type="VEuPathDB" id="TriTrypDB:TcYC6_0092870"/>
<dbReference type="VEuPathDB" id="TriTrypDB:TcYC6_0092880"/>
<dbReference type="VEuPathDB" id="TriTrypDB:TcYC6_0092890"/>
<dbReference type="VEuPathDB" id="TriTrypDB:TcYC6_0092900"/>
<dbReference type="VEuPathDB" id="TriTrypDB:TcYC6_0092910"/>
<dbReference type="VEuPathDB" id="TriTrypDB:TcYC6_0092920"/>
<dbReference type="VEuPathDB" id="TriTrypDB:TcYC6_0092930"/>
<dbReference type="VEuPathDB" id="TriTrypDB:TcYC6_0092940"/>
<dbReference type="VEuPathDB" id="TriTrypDB:TcYC6_0092950"/>
<dbReference type="GO" id="GO:0000786">
    <property type="term" value="C:nucleosome"/>
    <property type="evidence" value="ECO:0007669"/>
    <property type="project" value="UniProtKB-KW"/>
</dbReference>
<dbReference type="GO" id="GO:0005634">
    <property type="term" value="C:nucleus"/>
    <property type="evidence" value="ECO:0007669"/>
    <property type="project" value="UniProtKB-SubCell"/>
</dbReference>
<dbReference type="GO" id="GO:0003677">
    <property type="term" value="F:DNA binding"/>
    <property type="evidence" value="ECO:0007669"/>
    <property type="project" value="UniProtKB-KW"/>
</dbReference>
<dbReference type="GO" id="GO:0046982">
    <property type="term" value="F:protein heterodimerization activity"/>
    <property type="evidence" value="ECO:0007669"/>
    <property type="project" value="InterPro"/>
</dbReference>
<dbReference type="GO" id="GO:0030527">
    <property type="term" value="F:structural constituent of chromatin"/>
    <property type="evidence" value="ECO:0007669"/>
    <property type="project" value="InterPro"/>
</dbReference>
<dbReference type="CDD" id="cd00074">
    <property type="entry name" value="HFD_H2A"/>
    <property type="match status" value="1"/>
</dbReference>
<dbReference type="FunFam" id="1.10.20.10:FF:000086">
    <property type="entry name" value="Histone H2A"/>
    <property type="match status" value="1"/>
</dbReference>
<dbReference type="Gene3D" id="1.10.20.10">
    <property type="entry name" value="Histone, subunit A"/>
    <property type="match status" value="1"/>
</dbReference>
<dbReference type="InterPro" id="IPR009072">
    <property type="entry name" value="Histone-fold"/>
</dbReference>
<dbReference type="InterPro" id="IPR002119">
    <property type="entry name" value="Histone_H2A"/>
</dbReference>
<dbReference type="InterPro" id="IPR007125">
    <property type="entry name" value="Histone_H2A/H2B/H3"/>
</dbReference>
<dbReference type="InterPro" id="IPR032454">
    <property type="entry name" value="Histone_H2A_C"/>
</dbReference>
<dbReference type="InterPro" id="IPR032458">
    <property type="entry name" value="Histone_H2A_CS"/>
</dbReference>
<dbReference type="PANTHER" id="PTHR23430">
    <property type="entry name" value="HISTONE H2A"/>
    <property type="match status" value="1"/>
</dbReference>
<dbReference type="Pfam" id="PF00125">
    <property type="entry name" value="Histone"/>
    <property type="match status" value="1"/>
</dbReference>
<dbReference type="Pfam" id="PF16211">
    <property type="entry name" value="Histone_H2A_C"/>
    <property type="match status" value="1"/>
</dbReference>
<dbReference type="PRINTS" id="PR00620">
    <property type="entry name" value="HISTONEH2A"/>
</dbReference>
<dbReference type="SMART" id="SM00414">
    <property type="entry name" value="H2A"/>
    <property type="match status" value="1"/>
</dbReference>
<dbReference type="SUPFAM" id="SSF47113">
    <property type="entry name" value="Histone-fold"/>
    <property type="match status" value="1"/>
</dbReference>
<dbReference type="PROSITE" id="PS00046">
    <property type="entry name" value="HISTONE_H2A"/>
    <property type="match status" value="1"/>
</dbReference>
<name>H2A_TRYCR</name>
<organism>
    <name type="scientific">Trypanosoma cruzi</name>
    <dbReference type="NCBI Taxonomy" id="5693"/>
    <lineage>
        <taxon>Eukaryota</taxon>
        <taxon>Discoba</taxon>
        <taxon>Euglenozoa</taxon>
        <taxon>Kinetoplastea</taxon>
        <taxon>Metakinetoplastina</taxon>
        <taxon>Trypanosomatida</taxon>
        <taxon>Trypanosomatidae</taxon>
        <taxon>Trypanosoma</taxon>
        <taxon>Schizotrypanum</taxon>
    </lineage>
</organism>
<accession>P35066</accession>
<feature type="chain" id="PRO_0000055287" description="Histone H2A">
    <location>
        <begin position="1"/>
        <end position="135"/>
    </location>
</feature>
<protein>
    <recommendedName>
        <fullName>Histone H2A</fullName>
    </recommendedName>
</protein>
<keyword id="KW-0158">Chromosome</keyword>
<keyword id="KW-0238">DNA-binding</keyword>
<keyword id="KW-0544">Nucleosome core</keyword>
<keyword id="KW-0539">Nucleus</keyword>
<sequence>MATPKQAAKKASKKRSGGRSAKAGLIFPVGRVGSLLRRGQYARRIGASGAVYMAAVLEYLTAELLELSVKAASQQAKKPKRLTPRTVTLAVRHDDDLGMLLKDVTLSRGGVMPSLNKALAKKHKSSKKARATPSA</sequence>